<keyword id="KW-0150">Chloroplast</keyword>
<keyword id="KW-0396">Initiation factor</keyword>
<keyword id="KW-0934">Plastid</keyword>
<keyword id="KW-0648">Protein biosynthesis</keyword>
<keyword id="KW-0694">RNA-binding</keyword>
<keyword id="KW-0699">rRNA-binding</keyword>
<sequence length="89" mass="10413">MKKQDLIDMEGIVTESLPNAMFRVCLDNGCQVLTHISGKIRRNYIRILPGDRVRVELSPYDLTKGRIIYRLRNKYPNGISQEVFRSMRD</sequence>
<geneLocation type="chloroplast"/>
<proteinExistence type="inferred from homology"/>
<gene>
    <name evidence="1" type="primary">infA</name>
</gene>
<reference key="1">
    <citation type="journal article" date="2007" name="Am. Fern J.">
        <title>The complete plastid genome sequence of Angiopteris evecta (G. Forst.) Hoffm. (Marattiaceae).</title>
        <authorList>
            <person name="Roper J.M."/>
            <person name="Hansen S.K."/>
            <person name="Wolf P.G."/>
            <person name="Karol K.G."/>
            <person name="Mandoli D.F."/>
            <person name="Everett K.D.E."/>
            <person name="Kuehl J.V."/>
            <person name="Boore J.L."/>
        </authorList>
    </citation>
    <scope>NUCLEOTIDE SEQUENCE [LARGE SCALE GENOMIC DNA]</scope>
</reference>
<comment type="function">
    <text evidence="1">One of the essential components for the initiation of protein synthesis. Stabilizes the binding of IF-2 and IF-3 on the 30S subunit to which N-formylmethionyl-tRNA(fMet) subsequently binds. Helps modulate mRNA selection, yielding the 30S pre-initiation complex (PIC). Upon addition of the 50S ribosomal subunit IF-1, IF-2 and IF-3 are released leaving the mature 70S translation initiation complex.</text>
</comment>
<comment type="subunit">
    <text evidence="1">Component of the 30S ribosomal translation pre-initiation complex which assembles on the 30S ribosome in the order IF-2 and IF-3, IF-1 and N-formylmethionyl-tRNA(fMet); mRNA recruitment can occur at any time during PIC assembly.</text>
</comment>
<comment type="subcellular location">
    <subcellularLocation>
        <location evidence="1">Plastid</location>
        <location evidence="1">Chloroplast</location>
    </subcellularLocation>
</comment>
<comment type="similarity">
    <text evidence="1">Belongs to the IF-1 family.</text>
</comment>
<evidence type="ECO:0000255" key="1">
    <source>
        <dbReference type="HAMAP-Rule" id="MF_00075"/>
    </source>
</evidence>
<dbReference type="EMBL" id="DQ821119">
    <property type="protein sequence ID" value="ABG79635.1"/>
    <property type="molecule type" value="Genomic_DNA"/>
</dbReference>
<dbReference type="RefSeq" id="YP_001023736.1">
    <property type="nucleotide sequence ID" value="NC_008829.1"/>
</dbReference>
<dbReference type="SMR" id="A2T368"/>
<dbReference type="GeneID" id="4788261"/>
<dbReference type="GO" id="GO:0009507">
    <property type="term" value="C:chloroplast"/>
    <property type="evidence" value="ECO:0007669"/>
    <property type="project" value="UniProtKB-SubCell"/>
</dbReference>
<dbReference type="GO" id="GO:0005829">
    <property type="term" value="C:cytosol"/>
    <property type="evidence" value="ECO:0007669"/>
    <property type="project" value="TreeGrafter"/>
</dbReference>
<dbReference type="GO" id="GO:0043022">
    <property type="term" value="F:ribosome binding"/>
    <property type="evidence" value="ECO:0007669"/>
    <property type="project" value="UniProtKB-UniRule"/>
</dbReference>
<dbReference type="GO" id="GO:0019843">
    <property type="term" value="F:rRNA binding"/>
    <property type="evidence" value="ECO:0007669"/>
    <property type="project" value="UniProtKB-UniRule"/>
</dbReference>
<dbReference type="GO" id="GO:0003743">
    <property type="term" value="F:translation initiation factor activity"/>
    <property type="evidence" value="ECO:0007669"/>
    <property type="project" value="UniProtKB-UniRule"/>
</dbReference>
<dbReference type="CDD" id="cd04451">
    <property type="entry name" value="S1_IF1"/>
    <property type="match status" value="1"/>
</dbReference>
<dbReference type="FunFam" id="2.40.50.140:FF:000002">
    <property type="entry name" value="Translation initiation factor IF-1"/>
    <property type="match status" value="1"/>
</dbReference>
<dbReference type="Gene3D" id="2.40.50.140">
    <property type="entry name" value="Nucleic acid-binding proteins"/>
    <property type="match status" value="1"/>
</dbReference>
<dbReference type="HAMAP" id="MF_00075">
    <property type="entry name" value="IF_1"/>
    <property type="match status" value="1"/>
</dbReference>
<dbReference type="InterPro" id="IPR012340">
    <property type="entry name" value="NA-bd_OB-fold"/>
</dbReference>
<dbReference type="InterPro" id="IPR006196">
    <property type="entry name" value="RNA-binding_domain_S1_IF1"/>
</dbReference>
<dbReference type="InterPro" id="IPR003029">
    <property type="entry name" value="S1_domain"/>
</dbReference>
<dbReference type="InterPro" id="IPR004368">
    <property type="entry name" value="TIF_IF1"/>
</dbReference>
<dbReference type="NCBIfam" id="TIGR00008">
    <property type="entry name" value="infA"/>
    <property type="match status" value="1"/>
</dbReference>
<dbReference type="PANTHER" id="PTHR33370">
    <property type="entry name" value="TRANSLATION INITIATION FACTOR IF-1, CHLOROPLASTIC"/>
    <property type="match status" value="1"/>
</dbReference>
<dbReference type="PANTHER" id="PTHR33370:SF1">
    <property type="entry name" value="TRANSLATION INITIATION FACTOR IF-1, CHLOROPLASTIC"/>
    <property type="match status" value="1"/>
</dbReference>
<dbReference type="Pfam" id="PF01176">
    <property type="entry name" value="eIF-1a"/>
    <property type="match status" value="1"/>
</dbReference>
<dbReference type="SMART" id="SM00316">
    <property type="entry name" value="S1"/>
    <property type="match status" value="1"/>
</dbReference>
<dbReference type="SUPFAM" id="SSF50249">
    <property type="entry name" value="Nucleic acid-binding proteins"/>
    <property type="match status" value="1"/>
</dbReference>
<dbReference type="PROSITE" id="PS50832">
    <property type="entry name" value="S1_IF1_TYPE"/>
    <property type="match status" value="1"/>
</dbReference>
<accession>A2T368</accession>
<feature type="chain" id="PRO_0000338956" description="Translation initiation factor IF-1, chloroplastic">
    <location>
        <begin position="1"/>
        <end position="89"/>
    </location>
</feature>
<feature type="domain" description="S1-like" evidence="1">
    <location>
        <begin position="1"/>
        <end position="72"/>
    </location>
</feature>
<organism>
    <name type="scientific">Angiopteris evecta</name>
    <name type="common">Mule's foot fern</name>
    <name type="synonym">Polypodium evectum</name>
    <dbReference type="NCBI Taxonomy" id="13825"/>
    <lineage>
        <taxon>Eukaryota</taxon>
        <taxon>Viridiplantae</taxon>
        <taxon>Streptophyta</taxon>
        <taxon>Embryophyta</taxon>
        <taxon>Tracheophyta</taxon>
        <taxon>Polypodiopsida</taxon>
        <taxon>Marattiidae</taxon>
        <taxon>Marattiales</taxon>
        <taxon>Marattiaceae</taxon>
        <taxon>Angiopteris</taxon>
    </lineage>
</organism>
<protein>
    <recommendedName>
        <fullName evidence="1">Translation initiation factor IF-1, chloroplastic</fullName>
    </recommendedName>
</protein>
<name>IF1C_ANGEV</name>